<sequence>MSVKPNYSLKPYNTFGVDYACSELISVETKSELIRICSKLFAEDKPYLVLGGGSNILLTENYLGTVVQVCSKGIVCHEDDEFYYLSVEAGEEWHQLVEYCLATAMPGLENLALIPGTVGAAPIQNIGAYGVEFMDVCDWVEFLDLRDGALTRYKQEECQFGYRESIFKGALKGISVITGVGIKLAKKWRPNLSYGPLKRFENTGVTPKEIFDCICSTRNEKLPDPRLIGNAGSFFKNPIISFSKFQELIGKHPSLVGYPLPDGFVKLAAGWLIDNAGLKGASVGDAAVHEQQALVLINRGQASGKDILKLALKVIETIKIQFGVTLEAEPRVIGAYGEKELIDD</sequence>
<organism>
    <name type="scientific">Shewanella sediminis (strain HAW-EB3)</name>
    <dbReference type="NCBI Taxonomy" id="425104"/>
    <lineage>
        <taxon>Bacteria</taxon>
        <taxon>Pseudomonadati</taxon>
        <taxon>Pseudomonadota</taxon>
        <taxon>Gammaproteobacteria</taxon>
        <taxon>Alteromonadales</taxon>
        <taxon>Shewanellaceae</taxon>
        <taxon>Shewanella</taxon>
    </lineage>
</organism>
<proteinExistence type="inferred from homology"/>
<name>MURB_SHESH</name>
<reference key="1">
    <citation type="submission" date="2007-08" db="EMBL/GenBank/DDBJ databases">
        <title>Complete sequence of Shewanella sediminis HAW-EB3.</title>
        <authorList>
            <consortium name="US DOE Joint Genome Institute"/>
            <person name="Copeland A."/>
            <person name="Lucas S."/>
            <person name="Lapidus A."/>
            <person name="Barry K."/>
            <person name="Glavina del Rio T."/>
            <person name="Dalin E."/>
            <person name="Tice H."/>
            <person name="Pitluck S."/>
            <person name="Chertkov O."/>
            <person name="Brettin T."/>
            <person name="Bruce D."/>
            <person name="Detter J.C."/>
            <person name="Han C."/>
            <person name="Schmutz J."/>
            <person name="Larimer F."/>
            <person name="Land M."/>
            <person name="Hauser L."/>
            <person name="Kyrpides N."/>
            <person name="Kim E."/>
            <person name="Zhao J.-S."/>
            <person name="Richardson P."/>
        </authorList>
    </citation>
    <scope>NUCLEOTIDE SEQUENCE [LARGE SCALE GENOMIC DNA]</scope>
    <source>
        <strain>HAW-EB3</strain>
    </source>
</reference>
<feature type="chain" id="PRO_1000074526" description="UDP-N-acetylenolpyruvoylglucosamine reductase">
    <location>
        <begin position="1"/>
        <end position="344"/>
    </location>
</feature>
<feature type="domain" description="FAD-binding PCMH-type" evidence="1">
    <location>
        <begin position="17"/>
        <end position="187"/>
    </location>
</feature>
<feature type="active site" evidence="1">
    <location>
        <position position="163"/>
    </location>
</feature>
<feature type="active site" description="Proton donor" evidence="1">
    <location>
        <position position="233"/>
    </location>
</feature>
<feature type="active site" evidence="1">
    <location>
        <position position="329"/>
    </location>
</feature>
<evidence type="ECO:0000255" key="1">
    <source>
        <dbReference type="HAMAP-Rule" id="MF_00037"/>
    </source>
</evidence>
<gene>
    <name evidence="1" type="primary">murB</name>
    <name type="ordered locus">Ssed_4335</name>
</gene>
<dbReference type="EC" id="1.3.1.98" evidence="1"/>
<dbReference type="EMBL" id="CP000821">
    <property type="protein sequence ID" value="ABV38937.1"/>
    <property type="molecule type" value="Genomic_DNA"/>
</dbReference>
<dbReference type="RefSeq" id="WP_012144664.1">
    <property type="nucleotide sequence ID" value="NC_009831.1"/>
</dbReference>
<dbReference type="SMR" id="A8G1G4"/>
<dbReference type="STRING" id="425104.Ssed_4335"/>
<dbReference type="KEGG" id="sse:Ssed_4335"/>
<dbReference type="eggNOG" id="COG0812">
    <property type="taxonomic scope" value="Bacteria"/>
</dbReference>
<dbReference type="HOGENOM" id="CLU_035304_0_0_6"/>
<dbReference type="OrthoDB" id="9804753at2"/>
<dbReference type="UniPathway" id="UPA00219"/>
<dbReference type="Proteomes" id="UP000002015">
    <property type="component" value="Chromosome"/>
</dbReference>
<dbReference type="GO" id="GO:0005829">
    <property type="term" value="C:cytosol"/>
    <property type="evidence" value="ECO:0007669"/>
    <property type="project" value="TreeGrafter"/>
</dbReference>
<dbReference type="GO" id="GO:0071949">
    <property type="term" value="F:FAD binding"/>
    <property type="evidence" value="ECO:0007669"/>
    <property type="project" value="InterPro"/>
</dbReference>
<dbReference type="GO" id="GO:0008762">
    <property type="term" value="F:UDP-N-acetylmuramate dehydrogenase activity"/>
    <property type="evidence" value="ECO:0007669"/>
    <property type="project" value="UniProtKB-UniRule"/>
</dbReference>
<dbReference type="GO" id="GO:0051301">
    <property type="term" value="P:cell division"/>
    <property type="evidence" value="ECO:0007669"/>
    <property type="project" value="UniProtKB-KW"/>
</dbReference>
<dbReference type="GO" id="GO:0071555">
    <property type="term" value="P:cell wall organization"/>
    <property type="evidence" value="ECO:0007669"/>
    <property type="project" value="UniProtKB-KW"/>
</dbReference>
<dbReference type="GO" id="GO:0009252">
    <property type="term" value="P:peptidoglycan biosynthetic process"/>
    <property type="evidence" value="ECO:0007669"/>
    <property type="project" value="UniProtKB-UniRule"/>
</dbReference>
<dbReference type="GO" id="GO:0008360">
    <property type="term" value="P:regulation of cell shape"/>
    <property type="evidence" value="ECO:0007669"/>
    <property type="project" value="UniProtKB-KW"/>
</dbReference>
<dbReference type="Gene3D" id="3.30.465.10">
    <property type="match status" value="1"/>
</dbReference>
<dbReference type="Gene3D" id="3.90.78.10">
    <property type="entry name" value="UDP-N-acetylenolpyruvoylglucosamine reductase, C-terminal domain"/>
    <property type="match status" value="1"/>
</dbReference>
<dbReference type="Gene3D" id="3.30.43.10">
    <property type="entry name" value="Uridine Diphospho-n-acetylenolpyruvylglucosamine Reductase, domain 2"/>
    <property type="match status" value="1"/>
</dbReference>
<dbReference type="HAMAP" id="MF_00037">
    <property type="entry name" value="MurB"/>
    <property type="match status" value="1"/>
</dbReference>
<dbReference type="InterPro" id="IPR016166">
    <property type="entry name" value="FAD-bd_PCMH"/>
</dbReference>
<dbReference type="InterPro" id="IPR036318">
    <property type="entry name" value="FAD-bd_PCMH-like_sf"/>
</dbReference>
<dbReference type="InterPro" id="IPR016167">
    <property type="entry name" value="FAD-bd_PCMH_sub1"/>
</dbReference>
<dbReference type="InterPro" id="IPR016169">
    <property type="entry name" value="FAD-bd_PCMH_sub2"/>
</dbReference>
<dbReference type="InterPro" id="IPR003170">
    <property type="entry name" value="MurB"/>
</dbReference>
<dbReference type="InterPro" id="IPR011601">
    <property type="entry name" value="MurB_C"/>
</dbReference>
<dbReference type="InterPro" id="IPR036635">
    <property type="entry name" value="MurB_C_sf"/>
</dbReference>
<dbReference type="InterPro" id="IPR006094">
    <property type="entry name" value="Oxid_FAD_bind_N"/>
</dbReference>
<dbReference type="NCBIfam" id="TIGR00179">
    <property type="entry name" value="murB"/>
    <property type="match status" value="1"/>
</dbReference>
<dbReference type="NCBIfam" id="NF000755">
    <property type="entry name" value="PRK00046.1"/>
    <property type="match status" value="1"/>
</dbReference>
<dbReference type="PANTHER" id="PTHR21071">
    <property type="entry name" value="UDP-N-ACETYLENOLPYRUVOYLGLUCOSAMINE REDUCTASE"/>
    <property type="match status" value="1"/>
</dbReference>
<dbReference type="PANTHER" id="PTHR21071:SF4">
    <property type="entry name" value="UDP-N-ACETYLENOLPYRUVOYLGLUCOSAMINE REDUCTASE"/>
    <property type="match status" value="1"/>
</dbReference>
<dbReference type="Pfam" id="PF01565">
    <property type="entry name" value="FAD_binding_4"/>
    <property type="match status" value="1"/>
</dbReference>
<dbReference type="Pfam" id="PF02873">
    <property type="entry name" value="MurB_C"/>
    <property type="match status" value="1"/>
</dbReference>
<dbReference type="SUPFAM" id="SSF56176">
    <property type="entry name" value="FAD-binding/transporter-associated domain-like"/>
    <property type="match status" value="1"/>
</dbReference>
<dbReference type="SUPFAM" id="SSF56194">
    <property type="entry name" value="Uridine diphospho-N-Acetylenolpyruvylglucosamine reductase, MurB, C-terminal domain"/>
    <property type="match status" value="1"/>
</dbReference>
<dbReference type="PROSITE" id="PS51387">
    <property type="entry name" value="FAD_PCMH"/>
    <property type="match status" value="1"/>
</dbReference>
<accession>A8G1G4</accession>
<keyword id="KW-0131">Cell cycle</keyword>
<keyword id="KW-0132">Cell division</keyword>
<keyword id="KW-0133">Cell shape</keyword>
<keyword id="KW-0961">Cell wall biogenesis/degradation</keyword>
<keyword id="KW-0963">Cytoplasm</keyword>
<keyword id="KW-0274">FAD</keyword>
<keyword id="KW-0285">Flavoprotein</keyword>
<keyword id="KW-0521">NADP</keyword>
<keyword id="KW-0560">Oxidoreductase</keyword>
<keyword id="KW-0573">Peptidoglycan synthesis</keyword>
<keyword id="KW-1185">Reference proteome</keyword>
<comment type="function">
    <text evidence="1">Cell wall formation.</text>
</comment>
<comment type="catalytic activity">
    <reaction evidence="1">
        <text>UDP-N-acetyl-alpha-D-muramate + NADP(+) = UDP-N-acetyl-3-O-(1-carboxyvinyl)-alpha-D-glucosamine + NADPH + H(+)</text>
        <dbReference type="Rhea" id="RHEA:12248"/>
        <dbReference type="ChEBI" id="CHEBI:15378"/>
        <dbReference type="ChEBI" id="CHEBI:57783"/>
        <dbReference type="ChEBI" id="CHEBI:58349"/>
        <dbReference type="ChEBI" id="CHEBI:68483"/>
        <dbReference type="ChEBI" id="CHEBI:70757"/>
        <dbReference type="EC" id="1.3.1.98"/>
    </reaction>
</comment>
<comment type="cofactor">
    <cofactor evidence="1">
        <name>FAD</name>
        <dbReference type="ChEBI" id="CHEBI:57692"/>
    </cofactor>
</comment>
<comment type="pathway">
    <text evidence="1">Cell wall biogenesis; peptidoglycan biosynthesis.</text>
</comment>
<comment type="subcellular location">
    <subcellularLocation>
        <location evidence="1">Cytoplasm</location>
    </subcellularLocation>
</comment>
<comment type="similarity">
    <text evidence="1">Belongs to the MurB family.</text>
</comment>
<protein>
    <recommendedName>
        <fullName evidence="1">UDP-N-acetylenolpyruvoylglucosamine reductase</fullName>
        <ecNumber evidence="1">1.3.1.98</ecNumber>
    </recommendedName>
    <alternativeName>
        <fullName evidence="1">UDP-N-acetylmuramate dehydrogenase</fullName>
    </alternativeName>
</protein>